<name>SCNNG_RABIT</name>
<evidence type="ECO:0000250" key="1">
    <source>
        <dbReference type="UniProtKB" id="P37091"/>
    </source>
</evidence>
<evidence type="ECO:0000250" key="2">
    <source>
        <dbReference type="UniProtKB" id="P51170"/>
    </source>
</evidence>
<evidence type="ECO:0000250" key="3">
    <source>
        <dbReference type="UniProtKB" id="Q9WU39"/>
    </source>
</evidence>
<evidence type="ECO:0000255" key="4"/>
<evidence type="ECO:0000256" key="5">
    <source>
        <dbReference type="SAM" id="MobiDB-lite"/>
    </source>
</evidence>
<evidence type="ECO:0000305" key="6"/>
<dbReference type="EMBL" id="AJ132110">
    <property type="protein sequence ID" value="CAA10573.1"/>
    <property type="molecule type" value="mRNA"/>
</dbReference>
<dbReference type="EMBL" id="AF229027">
    <property type="protein sequence ID" value="AAF43682.1"/>
    <property type="molecule type" value="mRNA"/>
</dbReference>
<dbReference type="EMBL" id="U48960">
    <property type="protein sequence ID" value="AAB04952.1"/>
    <property type="molecule type" value="mRNA"/>
</dbReference>
<dbReference type="RefSeq" id="NP_001075595.1">
    <property type="nucleotide sequence ID" value="NM_001082126.1"/>
</dbReference>
<dbReference type="SMR" id="Q28738"/>
<dbReference type="FunCoup" id="Q28738">
    <property type="interactions" value="6"/>
</dbReference>
<dbReference type="STRING" id="9986.ENSOCUP00000036942"/>
<dbReference type="GlyCosmos" id="Q28738">
    <property type="glycosylation" value="3 sites, No reported glycans"/>
</dbReference>
<dbReference type="PaxDb" id="9986-ENSOCUP00000014947"/>
<dbReference type="GeneID" id="100008850"/>
<dbReference type="KEGG" id="ocu:100008850"/>
<dbReference type="CTD" id="6340"/>
<dbReference type="eggNOG" id="KOG4294">
    <property type="taxonomic scope" value="Eukaryota"/>
</dbReference>
<dbReference type="InParanoid" id="Q28738"/>
<dbReference type="OrthoDB" id="6021021at2759"/>
<dbReference type="Proteomes" id="UP000001811">
    <property type="component" value="Unplaced"/>
</dbReference>
<dbReference type="GO" id="GO:0016324">
    <property type="term" value="C:apical plasma membrane"/>
    <property type="evidence" value="ECO:0000250"/>
    <property type="project" value="UniProtKB"/>
</dbReference>
<dbReference type="GO" id="GO:0005886">
    <property type="term" value="C:plasma membrane"/>
    <property type="evidence" value="ECO:0000250"/>
    <property type="project" value="UniProtKB"/>
</dbReference>
<dbReference type="GO" id="GO:0034706">
    <property type="term" value="C:sodium channel complex"/>
    <property type="evidence" value="ECO:0000250"/>
    <property type="project" value="UniProtKB"/>
</dbReference>
<dbReference type="GO" id="GO:0015280">
    <property type="term" value="F:ligand-gated sodium channel activity"/>
    <property type="evidence" value="ECO:0007669"/>
    <property type="project" value="InterPro"/>
</dbReference>
<dbReference type="GO" id="GO:0050891">
    <property type="term" value="P:multicellular organismal-level water homeostasis"/>
    <property type="evidence" value="ECO:0000250"/>
    <property type="project" value="UniProtKB"/>
</dbReference>
<dbReference type="GO" id="GO:0055078">
    <property type="term" value="P:sodium ion homeostasis"/>
    <property type="evidence" value="ECO:0000250"/>
    <property type="project" value="UniProtKB"/>
</dbReference>
<dbReference type="GO" id="GO:0035725">
    <property type="term" value="P:sodium ion transmembrane transport"/>
    <property type="evidence" value="ECO:0000250"/>
    <property type="project" value="UniProtKB"/>
</dbReference>
<dbReference type="FunFam" id="1.10.287.770:FF:000005">
    <property type="entry name" value="Amiloride-sensitive sodium channel subunit gamma"/>
    <property type="match status" value="1"/>
</dbReference>
<dbReference type="FunFam" id="2.60.470.10:FF:000005">
    <property type="entry name" value="Amiloride-sensitive sodium channel subunit gamma"/>
    <property type="match status" value="1"/>
</dbReference>
<dbReference type="Gene3D" id="2.60.470.10">
    <property type="entry name" value="Acid-sensing ion channels like domains"/>
    <property type="match status" value="1"/>
</dbReference>
<dbReference type="Gene3D" id="1.10.287.770">
    <property type="entry name" value="YojJ-like"/>
    <property type="match status" value="1"/>
</dbReference>
<dbReference type="InterPro" id="IPR001873">
    <property type="entry name" value="ENaC"/>
</dbReference>
<dbReference type="InterPro" id="IPR004724">
    <property type="entry name" value="ENaC_chordates"/>
</dbReference>
<dbReference type="InterPro" id="IPR020903">
    <property type="entry name" value="ENaC_CS"/>
</dbReference>
<dbReference type="NCBIfam" id="TIGR00859">
    <property type="entry name" value="ENaC"/>
    <property type="match status" value="1"/>
</dbReference>
<dbReference type="PANTHER" id="PTHR11690:SF19">
    <property type="entry name" value="AMILORIDE-SENSITIVE SODIUM CHANNEL SUBUNIT GAMMA"/>
    <property type="match status" value="1"/>
</dbReference>
<dbReference type="PANTHER" id="PTHR11690">
    <property type="entry name" value="AMILORIDE-SENSITIVE SODIUM CHANNEL-RELATED"/>
    <property type="match status" value="1"/>
</dbReference>
<dbReference type="Pfam" id="PF00858">
    <property type="entry name" value="ASC"/>
    <property type="match status" value="1"/>
</dbReference>
<dbReference type="PRINTS" id="PR01078">
    <property type="entry name" value="AMINACHANNEL"/>
</dbReference>
<dbReference type="PROSITE" id="PS01206">
    <property type="entry name" value="ASC"/>
    <property type="match status" value="1"/>
</dbReference>
<comment type="function">
    <text evidence="2">This is one of the three pore-forming subunits of the heterotrimeric epithelial sodium channel (ENaC), a critical regulator of sodium balance and fluid homeostasis. ENaC operates in epithelial tissues, where it mediates the electrodiffusion of sodium ions from extracellular fluid through the apical membrane of cells, with water following osmotically. It plays a key role in maintaining sodium homeostasis through electrogenic sodium reabsorption in the kidneys. Additionally, ENaC is essential for airway surface liquid homeostasis, which is crucial for proper mucus clearance.</text>
</comment>
<comment type="catalytic activity">
    <reaction evidence="2">
        <text>Na(+)(in) = Na(+)(out)</text>
        <dbReference type="Rhea" id="RHEA:34963"/>
        <dbReference type="ChEBI" id="CHEBI:29101"/>
    </reaction>
</comment>
<comment type="activity regulation">
    <text evidence="2">Originally identified and characterized by its inhibition by the diuretic drug amiloride.</text>
</comment>
<comment type="subunit">
    <text evidence="2">Component of the heterotrimeric epithelial sodium channel (ENaC) composed of an alpha/SCNN1A, a beta/SCNN1B and a gamma/SCNN1G subunit. Interacts with WWP1 (via WW domains). Interacts with WWP2 (via WW domains); inhibits the channel. Interacts with the full-length immature form of PCSK9 (pro-PCSK9); inhibits ENaC by promoting its proteasomal degradation. Interacts with BPIFA1; the interaction is indirect via SCNN1B and inhibits the proteolytic maturation of SCNN1A and SCNN1G and the activation of ENaC.</text>
</comment>
<comment type="subcellular location">
    <subcellularLocation>
        <location evidence="2">Apical cell membrane</location>
        <topology evidence="2">Multi-pass membrane protein</topology>
    </subcellularLocation>
</comment>
<comment type="PTM">
    <text evidence="1">Phosphorylated on serine and threonine residues. Aldosterone and insulin increase the basal level of phosphorylation.</text>
</comment>
<comment type="PTM">
    <text evidence="2">Ubiquitinated. Can be ubiquitinated at multiple sites and undergo monoubiquitination and polyubiquitination. Ubiquitination by NEDD4 or NEDD4L inhibits the ENaC channel through endocytosis, intracellular retention and degradation of its individual subunits.</text>
</comment>
<comment type="PTM">
    <text evidence="2">ENaC is activated through the proteolytic maturation of its subunits. Furin cleaves the SCNN1G subunit first, followed by cleavage by prostasin (PRSS8), which results in a stepwise increase in the open probability of the channel due to the release of an inhibitory tract. BPIFA1, which is recruited by the SCNN1B subunit, prevents the proteolytic activation of ENaC.</text>
</comment>
<comment type="PTM">
    <text evidence="3">N-glycosylated. N-linked glycans are processed to complex type during ENaC complex assembly and transport to the plasma membrane.</text>
</comment>
<comment type="similarity">
    <text evidence="6">Belongs to the amiloride-sensitive sodium channel (TC 1.A.6) family. SCNN1G subfamily.</text>
</comment>
<gene>
    <name evidence="2" type="primary">SCNN1G</name>
</gene>
<reference key="1">
    <citation type="submission" date="1999-01" db="EMBL/GenBank/DDBJ databases">
        <title>The rabbit epithelial sodium channel.</title>
        <authorList>
            <person name="Kudlacek O."/>
            <person name="Weisz E."/>
            <person name="Wiener H."/>
            <person name="Plass H."/>
        </authorList>
    </citation>
    <scope>NUCLEOTIDE SEQUENCE [MRNA]</scope>
</reference>
<reference key="2">
    <citation type="submission" date="2000-01" db="EMBL/GenBank/DDBJ databases">
        <title>The rabbit DCT does not express amiloride sensitive sodium channel.</title>
        <authorList>
            <person name="Velazquez H."/>
            <person name="Silva T.C."/>
            <person name="Andujar E."/>
            <person name="Jaffer A."/>
            <person name="Ortiz D."/>
        </authorList>
    </citation>
    <scope>NUCLEOTIDE SEQUENCE [MRNA] OF 237-436</scope>
</reference>
<reference key="3">
    <citation type="journal article" date="1996" name="Am. J. Physiol.">
        <title>Aldosterone regulation of sodium channel gamma-subunit mRNA in cortical collecting duct cells.</title>
        <authorList>
            <person name="Denault D.L."/>
            <person name="Fejes-Toth G."/>
            <person name="Naray-Fejes-Toth A."/>
        </authorList>
    </citation>
    <scope>NUCLEOTIDE SEQUENCE [MRNA] OF 432-572</scope>
</reference>
<feature type="chain" id="PRO_0000181278" description="Epithelial sodium channel subunit gamma">
    <location>
        <begin position="1"/>
        <end position="653"/>
    </location>
</feature>
<feature type="topological domain" description="Cytoplasmic" evidence="2">
    <location>
        <begin position="1"/>
        <end position="55"/>
    </location>
</feature>
<feature type="transmembrane region" description="Helical; Name=1" evidence="4">
    <location>
        <begin position="56"/>
        <end position="76"/>
    </location>
</feature>
<feature type="topological domain" description="Extracellular" evidence="2">
    <location>
        <begin position="77"/>
        <end position="538"/>
    </location>
</feature>
<feature type="transmembrane region" description="Helical; Name=2" evidence="4">
    <location>
        <begin position="539"/>
        <end position="559"/>
    </location>
</feature>
<feature type="topological domain" description="Cytoplasmic" evidence="2">
    <location>
        <begin position="560"/>
        <end position="653"/>
    </location>
</feature>
<feature type="region of interest" description="Gating release of inhibition by proteolysis (GRIP); protease-sensitive region that is responsible for the proteolytic activation of the channel" evidence="2">
    <location>
        <begin position="137"/>
        <end position="225"/>
    </location>
</feature>
<feature type="region of interest" description="Disordered" evidence="5">
    <location>
        <begin position="582"/>
        <end position="632"/>
    </location>
</feature>
<feature type="short sequence motif" description="PY motif; recruits WW domain-containing proteins and is thereby required for ubiquitination and inhibition of the channel by NEDD4 and NEDD4L" evidence="2">
    <location>
        <begin position="627"/>
        <end position="631"/>
    </location>
</feature>
<feature type="site" description="Cleavage; by furin" evidence="3">
    <location>
        <begin position="140"/>
        <end position="141"/>
    </location>
</feature>
<feature type="site" description="Cleavage; by PRSS8" evidence="3">
    <location>
        <begin position="184"/>
        <end position="185"/>
    </location>
</feature>
<feature type="glycosylation site" description="N-linked (GlcNAc...) asparagine" evidence="4">
    <location>
        <position position="213"/>
    </location>
</feature>
<feature type="glycosylation site" description="N-linked (GlcNAc...) asparagine" evidence="4">
    <location>
        <position position="275"/>
    </location>
</feature>
<feature type="glycosylation site" description="N-linked (GlcNAc...) asparagine" evidence="4">
    <location>
        <position position="501"/>
    </location>
</feature>
<feature type="disulfide bond" evidence="2">
    <location>
        <begin position="100"/>
        <end position="287"/>
    </location>
</feature>
<feature type="disulfide bond" evidence="2">
    <location>
        <begin position="211"/>
        <end position="218"/>
    </location>
</feature>
<feature type="disulfide bond" evidence="2">
    <location>
        <begin position="264"/>
        <end position="271"/>
    </location>
</feature>
<feature type="disulfide bond" evidence="2">
    <location>
        <begin position="376"/>
        <end position="461"/>
    </location>
</feature>
<feature type="disulfide bond" evidence="2">
    <location>
        <begin position="398"/>
        <end position="457"/>
    </location>
</feature>
<feature type="disulfide bond" evidence="2">
    <location>
        <begin position="402"/>
        <end position="453"/>
    </location>
</feature>
<feature type="disulfide bond" evidence="2">
    <location>
        <begin position="411"/>
        <end position="438"/>
    </location>
</feature>
<feature type="disulfide bond" evidence="2">
    <location>
        <begin position="413"/>
        <end position="427"/>
    </location>
</feature>
<feature type="sequence conflict" description="In Ref. 2; AAF43682." evidence="6" ref="2">
    <original>D</original>
    <variation>E</variation>
    <location>
        <position position="267"/>
    </location>
</feature>
<feature type="sequence conflict" description="In Ref. 3; AAB04952." evidence="6" ref="3">
    <original>M</original>
    <variation>L</variation>
    <location>
        <position position="436"/>
    </location>
</feature>
<feature type="sequence conflict" description="In Ref. 3; AAB04952." evidence="6" ref="3">
    <original>W</original>
    <variation>L</variation>
    <location>
        <position position="505"/>
    </location>
</feature>
<feature type="sequence conflict" description="In Ref. 3; AAB04952." evidence="6" ref="3">
    <original>F</original>
    <variation>L</variation>
    <location>
        <position position="558"/>
    </location>
</feature>
<protein>
    <recommendedName>
        <fullName evidence="2">Epithelial sodium channel subunit gamma</fullName>
    </recommendedName>
    <alternativeName>
        <fullName evidence="2">Amiloride-sensitive sodium channel subunit gamma</fullName>
    </alternativeName>
</protein>
<organism>
    <name type="scientific">Oryctolagus cuniculus</name>
    <name type="common">Rabbit</name>
    <dbReference type="NCBI Taxonomy" id="9986"/>
    <lineage>
        <taxon>Eukaryota</taxon>
        <taxon>Metazoa</taxon>
        <taxon>Chordata</taxon>
        <taxon>Craniata</taxon>
        <taxon>Vertebrata</taxon>
        <taxon>Euteleostomi</taxon>
        <taxon>Mammalia</taxon>
        <taxon>Eutheria</taxon>
        <taxon>Euarchontoglires</taxon>
        <taxon>Glires</taxon>
        <taxon>Lagomorpha</taxon>
        <taxon>Leporidae</taxon>
        <taxon>Oryctolagus</taxon>
    </lineage>
</organism>
<proteinExistence type="evidence at transcript level"/>
<keyword id="KW-1003">Cell membrane</keyword>
<keyword id="KW-1015">Disulfide bond</keyword>
<keyword id="KW-0325">Glycoprotein</keyword>
<keyword id="KW-0407">Ion channel</keyword>
<keyword id="KW-0406">Ion transport</keyword>
<keyword id="KW-0472">Membrane</keyword>
<keyword id="KW-0597">Phosphoprotein</keyword>
<keyword id="KW-1185">Reference proteome</keyword>
<keyword id="KW-0915">Sodium</keyword>
<keyword id="KW-0894">Sodium channel</keyword>
<keyword id="KW-0739">Sodium transport</keyword>
<keyword id="KW-0812">Transmembrane</keyword>
<keyword id="KW-1133">Transmembrane helix</keyword>
<keyword id="KW-0813">Transport</keyword>
<keyword id="KW-0832">Ubl conjugation</keyword>
<accession>Q28738</accession>
<accession>Q9N131</accession>
<accession>Q9TSH7</accession>
<sequence length="653" mass="74287">MAPGEKIKAKIKKNLPVKGPQAPTIKELMRWYCLNTNTHGCRRIVVSPGRLRRLLWIAFTLTAVGLIFWQCALLVFSFYTVSVSIKVHFQKLDFPAVTICNINPYKYSVVRDLLADLEQETRGALKSLYGFSEVKSRKQRDTESWSPAWEGVRPKFLNLVPLLIFNRDEKGKARDFLSLGRKRKISGNIIHKASNVVQVHESKKVVGFQLCPNDSSDCATYTFSSGINAIQEWYKLHYMNIMAQVPLEKKINMSYSAEELLVTCFFDGMSCDARNFTLFHHPMYGNCYTFNNRENETILSTSMGGSEYGLQVILYINEEEYNPFLVSATGAKVLIHRQDEYPFIEDVGTEIETAMSTSIGMHLTESFKLSEPYSQCTEDGSDVPIKNIYNAAYSLQICLYSCFQTKMVEKCGCAQYSQPLPPAANYCNYQQHPNWMYCYYQLYQAFVQEELGCQSVCKQSCSFKEWALTTSLAQWPSAVSEKWLLPVLTWDQGQQINKKLNKTDWAKLLIFYKDLNQRSIMESPANSIEMLLSNFGGQLGLWMSCSVVCVIEIIEVFFIDSLSIVTRRQWQKAKEWWARRKAAPSAEAPSGAQGQENPALEIDDDLPTFTSALSLPPAPGAQVPGTPPPRYNTLRLERTFSQQLADTRLPDEP</sequence>